<name>PYRG_PSEPF</name>
<organism>
    <name type="scientific">Pseudomonas fluorescens (strain Pf0-1)</name>
    <dbReference type="NCBI Taxonomy" id="205922"/>
    <lineage>
        <taxon>Bacteria</taxon>
        <taxon>Pseudomonadati</taxon>
        <taxon>Pseudomonadota</taxon>
        <taxon>Gammaproteobacteria</taxon>
        <taxon>Pseudomonadales</taxon>
        <taxon>Pseudomonadaceae</taxon>
        <taxon>Pseudomonas</taxon>
    </lineage>
</organism>
<sequence length="543" mass="59698">MTRYIFVTGGVVSSLGKGIASASLAAILEARGLKVTMLKLDPYINVDPGTMSPFQHGEVFVTHDGAETDLDLGHYERFIRTTMTQNNNFTTGRVYEHVLRKERRGDYLGATIQVIPHITDEIKRRIIKGAGDADVALVEIGGTVGDIESQPFLEAIRQLRVEVGSKRAMLMHLTLVPYIATAGETKTKPTQHSVKELRSIGLQPDVLICRSDHPVDVSSRRKIALFTNVEERAVISLEDVDTIYKIPAVLHAQGLDDFVVERFGLQCNGADLSEWEKVVDAKLNPEHEVTIAMVGKYMELLDAYKSLIEAMSHAGITNRTKVNLRYIDSEDIENQGTALLEGVDAILVPGGFGLRGVEGKITAVQYARENKVPYLGICLGMQVAVIEFARNVLGWKDANSTEFDRASGHPVVGLITEWEDATGAVEVRTEASDLGGTMRLGAQECLLEAGSKVHDCYGKDVIVERHRHRYEVNNNLLPQIIEAGLKISGRSSDAALVEVVEAPDHPWFVACQFHPEFTSTPRDGHPLFSGFVKAALAQHQKKA</sequence>
<feature type="chain" id="PRO_0000266186" description="CTP synthase">
    <location>
        <begin position="1"/>
        <end position="543"/>
    </location>
</feature>
<feature type="domain" description="Glutamine amidotransferase type-1" evidence="1">
    <location>
        <begin position="290"/>
        <end position="541"/>
    </location>
</feature>
<feature type="region of interest" description="Amidoligase domain" evidence="1">
    <location>
        <begin position="1"/>
        <end position="265"/>
    </location>
</feature>
<feature type="active site" description="Nucleophile; for glutamine hydrolysis" evidence="1">
    <location>
        <position position="378"/>
    </location>
</feature>
<feature type="active site" evidence="1">
    <location>
        <position position="514"/>
    </location>
</feature>
<feature type="active site" evidence="1">
    <location>
        <position position="516"/>
    </location>
</feature>
<feature type="binding site" evidence="1">
    <location>
        <position position="13"/>
    </location>
    <ligand>
        <name>CTP</name>
        <dbReference type="ChEBI" id="CHEBI:37563"/>
        <note>allosteric inhibitor</note>
    </ligand>
</feature>
<feature type="binding site" evidence="1">
    <location>
        <position position="13"/>
    </location>
    <ligand>
        <name>UTP</name>
        <dbReference type="ChEBI" id="CHEBI:46398"/>
    </ligand>
</feature>
<feature type="binding site" evidence="1">
    <location>
        <begin position="14"/>
        <end position="19"/>
    </location>
    <ligand>
        <name>ATP</name>
        <dbReference type="ChEBI" id="CHEBI:30616"/>
    </ligand>
</feature>
<feature type="binding site" evidence="1">
    <location>
        <position position="71"/>
    </location>
    <ligand>
        <name>ATP</name>
        <dbReference type="ChEBI" id="CHEBI:30616"/>
    </ligand>
</feature>
<feature type="binding site" evidence="1">
    <location>
        <position position="71"/>
    </location>
    <ligand>
        <name>Mg(2+)</name>
        <dbReference type="ChEBI" id="CHEBI:18420"/>
    </ligand>
</feature>
<feature type="binding site" evidence="1">
    <location>
        <position position="139"/>
    </location>
    <ligand>
        <name>Mg(2+)</name>
        <dbReference type="ChEBI" id="CHEBI:18420"/>
    </ligand>
</feature>
<feature type="binding site" evidence="1">
    <location>
        <begin position="146"/>
        <end position="148"/>
    </location>
    <ligand>
        <name>CTP</name>
        <dbReference type="ChEBI" id="CHEBI:37563"/>
        <note>allosteric inhibitor</note>
    </ligand>
</feature>
<feature type="binding site" evidence="1">
    <location>
        <begin position="186"/>
        <end position="191"/>
    </location>
    <ligand>
        <name>CTP</name>
        <dbReference type="ChEBI" id="CHEBI:37563"/>
        <note>allosteric inhibitor</note>
    </ligand>
</feature>
<feature type="binding site" evidence="1">
    <location>
        <begin position="186"/>
        <end position="191"/>
    </location>
    <ligand>
        <name>UTP</name>
        <dbReference type="ChEBI" id="CHEBI:46398"/>
    </ligand>
</feature>
<feature type="binding site" evidence="1">
    <location>
        <position position="222"/>
    </location>
    <ligand>
        <name>CTP</name>
        <dbReference type="ChEBI" id="CHEBI:37563"/>
        <note>allosteric inhibitor</note>
    </ligand>
</feature>
<feature type="binding site" evidence="1">
    <location>
        <position position="222"/>
    </location>
    <ligand>
        <name>UTP</name>
        <dbReference type="ChEBI" id="CHEBI:46398"/>
    </ligand>
</feature>
<feature type="binding site" evidence="1">
    <location>
        <position position="351"/>
    </location>
    <ligand>
        <name>L-glutamine</name>
        <dbReference type="ChEBI" id="CHEBI:58359"/>
    </ligand>
</feature>
<feature type="binding site" evidence="1">
    <location>
        <begin position="379"/>
        <end position="382"/>
    </location>
    <ligand>
        <name>L-glutamine</name>
        <dbReference type="ChEBI" id="CHEBI:58359"/>
    </ligand>
</feature>
<feature type="binding site" evidence="1">
    <location>
        <position position="402"/>
    </location>
    <ligand>
        <name>L-glutamine</name>
        <dbReference type="ChEBI" id="CHEBI:58359"/>
    </ligand>
</feature>
<feature type="binding site" evidence="1">
    <location>
        <position position="469"/>
    </location>
    <ligand>
        <name>L-glutamine</name>
        <dbReference type="ChEBI" id="CHEBI:58359"/>
    </ligand>
</feature>
<comment type="function">
    <text evidence="1">Catalyzes the ATP-dependent amination of UTP to CTP with either L-glutamine or ammonia as the source of nitrogen. Regulates intracellular CTP levels through interactions with the four ribonucleotide triphosphates.</text>
</comment>
<comment type="catalytic activity">
    <reaction evidence="1">
        <text>UTP + L-glutamine + ATP + H2O = CTP + L-glutamate + ADP + phosphate + 2 H(+)</text>
        <dbReference type="Rhea" id="RHEA:26426"/>
        <dbReference type="ChEBI" id="CHEBI:15377"/>
        <dbReference type="ChEBI" id="CHEBI:15378"/>
        <dbReference type="ChEBI" id="CHEBI:29985"/>
        <dbReference type="ChEBI" id="CHEBI:30616"/>
        <dbReference type="ChEBI" id="CHEBI:37563"/>
        <dbReference type="ChEBI" id="CHEBI:43474"/>
        <dbReference type="ChEBI" id="CHEBI:46398"/>
        <dbReference type="ChEBI" id="CHEBI:58359"/>
        <dbReference type="ChEBI" id="CHEBI:456216"/>
        <dbReference type="EC" id="6.3.4.2"/>
    </reaction>
</comment>
<comment type="catalytic activity">
    <reaction evidence="1">
        <text>L-glutamine + H2O = L-glutamate + NH4(+)</text>
        <dbReference type="Rhea" id="RHEA:15889"/>
        <dbReference type="ChEBI" id="CHEBI:15377"/>
        <dbReference type="ChEBI" id="CHEBI:28938"/>
        <dbReference type="ChEBI" id="CHEBI:29985"/>
        <dbReference type="ChEBI" id="CHEBI:58359"/>
    </reaction>
</comment>
<comment type="catalytic activity">
    <reaction evidence="1">
        <text>UTP + NH4(+) + ATP = CTP + ADP + phosphate + 2 H(+)</text>
        <dbReference type="Rhea" id="RHEA:16597"/>
        <dbReference type="ChEBI" id="CHEBI:15378"/>
        <dbReference type="ChEBI" id="CHEBI:28938"/>
        <dbReference type="ChEBI" id="CHEBI:30616"/>
        <dbReference type="ChEBI" id="CHEBI:37563"/>
        <dbReference type="ChEBI" id="CHEBI:43474"/>
        <dbReference type="ChEBI" id="CHEBI:46398"/>
        <dbReference type="ChEBI" id="CHEBI:456216"/>
    </reaction>
</comment>
<comment type="activity regulation">
    <text evidence="1">Allosterically activated by GTP, when glutamine is the substrate; GTP has no effect on the reaction when ammonia is the substrate. The allosteric effector GTP functions by stabilizing the protein conformation that binds the tetrahedral intermediate(s) formed during glutamine hydrolysis. Inhibited by the product CTP, via allosteric rather than competitive inhibition.</text>
</comment>
<comment type="pathway">
    <text evidence="1">Pyrimidine metabolism; CTP biosynthesis via de novo pathway; CTP from UDP: step 2/2.</text>
</comment>
<comment type="subunit">
    <text evidence="1">Homotetramer.</text>
</comment>
<comment type="miscellaneous">
    <text evidence="1">CTPSs have evolved a hybrid strategy for distinguishing between UTP and CTP. The overlapping regions of the product feedback inhibitory and substrate sites recognize a common feature in both compounds, the triphosphate moiety. To differentiate isosteric substrate and product pyrimidine rings, an additional pocket far from the expected kinase/ligase catalytic site, specifically recognizes the cytosine and ribose portions of the product inhibitor.</text>
</comment>
<comment type="similarity">
    <text evidence="1">Belongs to the CTP synthase family.</text>
</comment>
<gene>
    <name evidence="1" type="primary">pyrG</name>
    <name type="ordered locus">Pfl01_1119</name>
</gene>
<accession>Q3KH94</accession>
<evidence type="ECO:0000255" key="1">
    <source>
        <dbReference type="HAMAP-Rule" id="MF_01227"/>
    </source>
</evidence>
<keyword id="KW-0067">ATP-binding</keyword>
<keyword id="KW-0315">Glutamine amidotransferase</keyword>
<keyword id="KW-0436">Ligase</keyword>
<keyword id="KW-0460">Magnesium</keyword>
<keyword id="KW-0479">Metal-binding</keyword>
<keyword id="KW-0547">Nucleotide-binding</keyword>
<keyword id="KW-0665">Pyrimidine biosynthesis</keyword>
<dbReference type="EC" id="6.3.4.2" evidence="1"/>
<dbReference type="EMBL" id="CP000094">
    <property type="protein sequence ID" value="ABA72862.1"/>
    <property type="molecule type" value="Genomic_DNA"/>
</dbReference>
<dbReference type="RefSeq" id="WP_011332696.1">
    <property type="nucleotide sequence ID" value="NC_007492.2"/>
</dbReference>
<dbReference type="SMR" id="Q3KH94"/>
<dbReference type="MEROPS" id="C26.964"/>
<dbReference type="KEGG" id="pfo:Pfl01_1119"/>
<dbReference type="eggNOG" id="COG0504">
    <property type="taxonomic scope" value="Bacteria"/>
</dbReference>
<dbReference type="HOGENOM" id="CLU_011675_5_0_6"/>
<dbReference type="UniPathway" id="UPA00159">
    <property type="reaction ID" value="UER00277"/>
</dbReference>
<dbReference type="Proteomes" id="UP000002704">
    <property type="component" value="Chromosome"/>
</dbReference>
<dbReference type="GO" id="GO:0005829">
    <property type="term" value="C:cytosol"/>
    <property type="evidence" value="ECO:0007669"/>
    <property type="project" value="TreeGrafter"/>
</dbReference>
<dbReference type="GO" id="GO:0005524">
    <property type="term" value="F:ATP binding"/>
    <property type="evidence" value="ECO:0007669"/>
    <property type="project" value="UniProtKB-KW"/>
</dbReference>
<dbReference type="GO" id="GO:0003883">
    <property type="term" value="F:CTP synthase activity"/>
    <property type="evidence" value="ECO:0007669"/>
    <property type="project" value="UniProtKB-UniRule"/>
</dbReference>
<dbReference type="GO" id="GO:0004359">
    <property type="term" value="F:glutaminase activity"/>
    <property type="evidence" value="ECO:0007669"/>
    <property type="project" value="RHEA"/>
</dbReference>
<dbReference type="GO" id="GO:0042802">
    <property type="term" value="F:identical protein binding"/>
    <property type="evidence" value="ECO:0007669"/>
    <property type="project" value="TreeGrafter"/>
</dbReference>
<dbReference type="GO" id="GO:0046872">
    <property type="term" value="F:metal ion binding"/>
    <property type="evidence" value="ECO:0007669"/>
    <property type="project" value="UniProtKB-KW"/>
</dbReference>
<dbReference type="GO" id="GO:0044210">
    <property type="term" value="P:'de novo' CTP biosynthetic process"/>
    <property type="evidence" value="ECO:0007669"/>
    <property type="project" value="UniProtKB-UniRule"/>
</dbReference>
<dbReference type="GO" id="GO:0019856">
    <property type="term" value="P:pyrimidine nucleobase biosynthetic process"/>
    <property type="evidence" value="ECO:0007669"/>
    <property type="project" value="TreeGrafter"/>
</dbReference>
<dbReference type="CDD" id="cd03113">
    <property type="entry name" value="CTPS_N"/>
    <property type="match status" value="1"/>
</dbReference>
<dbReference type="CDD" id="cd01746">
    <property type="entry name" value="GATase1_CTP_Synthase"/>
    <property type="match status" value="1"/>
</dbReference>
<dbReference type="FunFam" id="3.40.50.300:FF:000009">
    <property type="entry name" value="CTP synthase"/>
    <property type="match status" value="1"/>
</dbReference>
<dbReference type="FunFam" id="3.40.50.880:FF:000002">
    <property type="entry name" value="CTP synthase"/>
    <property type="match status" value="1"/>
</dbReference>
<dbReference type="Gene3D" id="3.40.50.880">
    <property type="match status" value="1"/>
</dbReference>
<dbReference type="Gene3D" id="3.40.50.300">
    <property type="entry name" value="P-loop containing nucleotide triphosphate hydrolases"/>
    <property type="match status" value="1"/>
</dbReference>
<dbReference type="HAMAP" id="MF_01227">
    <property type="entry name" value="PyrG"/>
    <property type="match status" value="1"/>
</dbReference>
<dbReference type="InterPro" id="IPR029062">
    <property type="entry name" value="Class_I_gatase-like"/>
</dbReference>
<dbReference type="InterPro" id="IPR004468">
    <property type="entry name" value="CTP_synthase"/>
</dbReference>
<dbReference type="InterPro" id="IPR017456">
    <property type="entry name" value="CTP_synthase_N"/>
</dbReference>
<dbReference type="InterPro" id="IPR017926">
    <property type="entry name" value="GATASE"/>
</dbReference>
<dbReference type="InterPro" id="IPR033828">
    <property type="entry name" value="GATase1_CTP_Synthase"/>
</dbReference>
<dbReference type="InterPro" id="IPR027417">
    <property type="entry name" value="P-loop_NTPase"/>
</dbReference>
<dbReference type="NCBIfam" id="NF003792">
    <property type="entry name" value="PRK05380.1"/>
    <property type="match status" value="1"/>
</dbReference>
<dbReference type="NCBIfam" id="TIGR00337">
    <property type="entry name" value="PyrG"/>
    <property type="match status" value="1"/>
</dbReference>
<dbReference type="PANTHER" id="PTHR11550">
    <property type="entry name" value="CTP SYNTHASE"/>
    <property type="match status" value="1"/>
</dbReference>
<dbReference type="PANTHER" id="PTHR11550:SF0">
    <property type="entry name" value="CTP SYNTHASE-RELATED"/>
    <property type="match status" value="1"/>
</dbReference>
<dbReference type="Pfam" id="PF06418">
    <property type="entry name" value="CTP_synth_N"/>
    <property type="match status" value="1"/>
</dbReference>
<dbReference type="Pfam" id="PF00117">
    <property type="entry name" value="GATase"/>
    <property type="match status" value="1"/>
</dbReference>
<dbReference type="SUPFAM" id="SSF52317">
    <property type="entry name" value="Class I glutamine amidotransferase-like"/>
    <property type="match status" value="1"/>
</dbReference>
<dbReference type="SUPFAM" id="SSF52540">
    <property type="entry name" value="P-loop containing nucleoside triphosphate hydrolases"/>
    <property type="match status" value="1"/>
</dbReference>
<dbReference type="PROSITE" id="PS51273">
    <property type="entry name" value="GATASE_TYPE_1"/>
    <property type="match status" value="1"/>
</dbReference>
<reference key="1">
    <citation type="journal article" date="2009" name="Genome Biol.">
        <title>Genomic and genetic analyses of diversity and plant interactions of Pseudomonas fluorescens.</title>
        <authorList>
            <person name="Silby M.W."/>
            <person name="Cerdeno-Tarraga A.M."/>
            <person name="Vernikos G.S."/>
            <person name="Giddens S.R."/>
            <person name="Jackson R.W."/>
            <person name="Preston G.M."/>
            <person name="Zhang X.-X."/>
            <person name="Moon C.D."/>
            <person name="Gehrig S.M."/>
            <person name="Godfrey S.A.C."/>
            <person name="Knight C.G."/>
            <person name="Malone J.G."/>
            <person name="Robinson Z."/>
            <person name="Spiers A.J."/>
            <person name="Harris S."/>
            <person name="Challis G.L."/>
            <person name="Yaxley A.M."/>
            <person name="Harris D."/>
            <person name="Seeger K."/>
            <person name="Murphy L."/>
            <person name="Rutter S."/>
            <person name="Squares R."/>
            <person name="Quail M.A."/>
            <person name="Saunders E."/>
            <person name="Mavromatis K."/>
            <person name="Brettin T.S."/>
            <person name="Bentley S.D."/>
            <person name="Hothersall J."/>
            <person name="Stephens E."/>
            <person name="Thomas C.M."/>
            <person name="Parkhill J."/>
            <person name="Levy S.B."/>
            <person name="Rainey P.B."/>
            <person name="Thomson N.R."/>
        </authorList>
    </citation>
    <scope>NUCLEOTIDE SEQUENCE [LARGE SCALE GENOMIC DNA]</scope>
    <source>
        <strain>Pf0-1</strain>
    </source>
</reference>
<proteinExistence type="inferred from homology"/>
<protein>
    <recommendedName>
        <fullName evidence="1">CTP synthase</fullName>
        <ecNumber evidence="1">6.3.4.2</ecNumber>
    </recommendedName>
    <alternativeName>
        <fullName evidence="1">Cytidine 5'-triphosphate synthase</fullName>
    </alternativeName>
    <alternativeName>
        <fullName evidence="1">Cytidine triphosphate synthetase</fullName>
        <shortName evidence="1">CTP synthetase</shortName>
        <shortName evidence="1">CTPS</shortName>
    </alternativeName>
    <alternativeName>
        <fullName evidence="1">UTP--ammonia ligase</fullName>
    </alternativeName>
</protein>